<accession>P40608</accession>
<reference key="1">
    <citation type="journal article" date="1994" name="J. Bacteriol.">
        <title>MotX, the channel component of the sodium-type flagellar motor.</title>
        <authorList>
            <person name="McCarter L.L."/>
        </authorList>
    </citation>
    <scope>NUCLEOTIDE SEQUENCE [GENOMIC DNA]</scope>
    <source>
        <strain>BB22</strain>
    </source>
</reference>
<reference key="2">
    <citation type="journal article" date="2003" name="Lancet">
        <title>Genome sequence of Vibrio parahaemolyticus: a pathogenic mechanism distinct from that of V. cholerae.</title>
        <authorList>
            <person name="Makino K."/>
            <person name="Oshima K."/>
            <person name="Kurokawa K."/>
            <person name="Yokoyama K."/>
            <person name="Uda T."/>
            <person name="Tagomori K."/>
            <person name="Iijima Y."/>
            <person name="Najima M."/>
            <person name="Nakano M."/>
            <person name="Yamashita A."/>
            <person name="Kubota Y."/>
            <person name="Kimura S."/>
            <person name="Yasunaga T."/>
            <person name="Honda T."/>
            <person name="Shinagawa H."/>
            <person name="Hattori M."/>
            <person name="Iida T."/>
        </authorList>
    </citation>
    <scope>NUCLEOTIDE SEQUENCE [LARGE SCALE GENOMIC DNA]</scope>
    <source>
        <strain>RIMD 2210633</strain>
    </source>
</reference>
<feature type="chain" id="PRO_0000180985" description="Sodium-type polar flagellar protein MotX">
    <location>
        <begin position="1"/>
        <end position="211"/>
    </location>
</feature>
<feature type="repeat" description="Sel1-like 1">
    <location>
        <begin position="72"/>
        <end position="107"/>
    </location>
</feature>
<feature type="repeat" description="Sel1-like 2">
    <location>
        <begin position="108"/>
        <end position="143"/>
    </location>
</feature>
<feature type="repeat" description="Sel1-like 3">
    <location>
        <begin position="144"/>
        <end position="179"/>
    </location>
</feature>
<feature type="sequence conflict" description="In Ref. 1; AAA62189." evidence="1" ref="1">
    <original>V</original>
    <variation>I</variation>
    <location>
        <position position="201"/>
    </location>
</feature>
<keyword id="KW-1005">Bacterial flagellum biogenesis</keyword>
<keyword id="KW-0997">Cell inner membrane</keyword>
<keyword id="KW-1003">Cell membrane</keyword>
<keyword id="KW-0407">Ion channel</keyword>
<keyword id="KW-0406">Ion transport</keyword>
<keyword id="KW-0472">Membrane</keyword>
<keyword id="KW-0677">Repeat</keyword>
<keyword id="KW-0915">Sodium</keyword>
<keyword id="KW-0894">Sodium channel</keyword>
<keyword id="KW-0739">Sodium transport</keyword>
<keyword id="KW-0813">Transport</keyword>
<gene>
    <name type="primary">motX</name>
    <name type="ordered locus">VP2811</name>
</gene>
<comment type="function">
    <text>The power to drive the polar flagellar rotary motor of V.parahaemolyticus is derived from the transmembrane potential of sodium ions. Force is generated by the motor on coupling of the movement of ions across the membrane to rotation of the flagellum. MotX interacts with MotY, which is the presumed stationary component of the motor. MotX may form a sodium channel.</text>
</comment>
<comment type="subcellular location">
    <subcellularLocation>
        <location>Cell inner membrane</location>
        <topology>Peripheral membrane protein</topology>
    </subcellularLocation>
</comment>
<evidence type="ECO:0000305" key="1"/>
<dbReference type="EMBL" id="U09005">
    <property type="protein sequence ID" value="AAA62189.1"/>
    <property type="molecule type" value="Genomic_DNA"/>
</dbReference>
<dbReference type="EMBL" id="BA000031">
    <property type="protein sequence ID" value="BAC61073.1"/>
    <property type="molecule type" value="Genomic_DNA"/>
</dbReference>
<dbReference type="RefSeq" id="NP_799189.1">
    <property type="nucleotide sequence ID" value="NC_004603.1"/>
</dbReference>
<dbReference type="RefSeq" id="WP_005480078.1">
    <property type="nucleotide sequence ID" value="NC_004603.1"/>
</dbReference>
<dbReference type="SMR" id="P40608"/>
<dbReference type="GeneID" id="1190360"/>
<dbReference type="KEGG" id="vpa:VP2811"/>
<dbReference type="PATRIC" id="fig|223926.6.peg.2702"/>
<dbReference type="eggNOG" id="COG0790">
    <property type="taxonomic scope" value="Bacteria"/>
</dbReference>
<dbReference type="HOGENOM" id="CLU_079818_1_0_6"/>
<dbReference type="Proteomes" id="UP000002493">
    <property type="component" value="Chromosome 1"/>
</dbReference>
<dbReference type="GO" id="GO:0005886">
    <property type="term" value="C:plasma membrane"/>
    <property type="evidence" value="ECO:0007669"/>
    <property type="project" value="UniProtKB-SubCell"/>
</dbReference>
<dbReference type="GO" id="GO:0005272">
    <property type="term" value="F:sodium channel activity"/>
    <property type="evidence" value="ECO:0007669"/>
    <property type="project" value="UniProtKB-KW"/>
</dbReference>
<dbReference type="GO" id="GO:0044781">
    <property type="term" value="P:bacterial-type flagellum organization"/>
    <property type="evidence" value="ECO:0007669"/>
    <property type="project" value="UniProtKB-KW"/>
</dbReference>
<dbReference type="FunFam" id="1.25.40.10:FF:000346">
    <property type="entry name" value="Sodium-type flagellar protein MotX"/>
    <property type="match status" value="1"/>
</dbReference>
<dbReference type="Gene3D" id="1.25.40.10">
    <property type="entry name" value="Tetratricopeptide repeat domain"/>
    <property type="match status" value="1"/>
</dbReference>
<dbReference type="InterPro" id="IPR006597">
    <property type="entry name" value="Sel1-like"/>
</dbReference>
<dbReference type="InterPro" id="IPR050767">
    <property type="entry name" value="Sel1_AlgK"/>
</dbReference>
<dbReference type="InterPro" id="IPR011990">
    <property type="entry name" value="TPR-like_helical_dom_sf"/>
</dbReference>
<dbReference type="NCBIfam" id="NF047621">
    <property type="entry name" value="FlgprotMotXVib"/>
    <property type="match status" value="1"/>
</dbReference>
<dbReference type="PANTHER" id="PTHR11102:SF160">
    <property type="entry name" value="ERAD-ASSOCIATED E3 UBIQUITIN-PROTEIN LIGASE COMPONENT HRD3"/>
    <property type="match status" value="1"/>
</dbReference>
<dbReference type="PANTHER" id="PTHR11102">
    <property type="entry name" value="SEL-1-LIKE PROTEIN"/>
    <property type="match status" value="1"/>
</dbReference>
<dbReference type="Pfam" id="PF08238">
    <property type="entry name" value="Sel1"/>
    <property type="match status" value="3"/>
</dbReference>
<dbReference type="SMART" id="SM00671">
    <property type="entry name" value="SEL1"/>
    <property type="match status" value="3"/>
</dbReference>
<dbReference type="SUPFAM" id="SSF81901">
    <property type="entry name" value="HCP-like"/>
    <property type="match status" value="1"/>
</dbReference>
<sequence>MKLRTVAASLLLMLSATTVRASAADVGAPVPIYTEAELIKLIEQNKHLQRVRADNCQLVEDIVARATRINLPAYEFLYGDMLAWGVCVEQDVELGLYYMENAAQQGLPAALEQIGRYYSRGTLVQQDKERAIPYLREAASMGNLNARIHLAELLLRDYGSPLDYEDAYRWLYNSVTADQRQHKRIAVLRRGLEQRMPQNIVARAKRRDMFW</sequence>
<proteinExistence type="predicted"/>
<protein>
    <recommendedName>
        <fullName>Sodium-type polar flagellar protein MotX</fullName>
    </recommendedName>
</protein>
<organism>
    <name type="scientific">Vibrio parahaemolyticus serotype O3:K6 (strain RIMD 2210633)</name>
    <dbReference type="NCBI Taxonomy" id="223926"/>
    <lineage>
        <taxon>Bacteria</taxon>
        <taxon>Pseudomonadati</taxon>
        <taxon>Pseudomonadota</taxon>
        <taxon>Gammaproteobacteria</taxon>
        <taxon>Vibrionales</taxon>
        <taxon>Vibrionaceae</taxon>
        <taxon>Vibrio</taxon>
    </lineage>
</organism>
<name>MOTX_VIBPA</name>